<gene>
    <name type="primary">COL1A1</name>
</gene>
<dbReference type="EMBL" id="AF153062">
    <property type="protein sequence ID" value="AAD34619.1"/>
    <property type="molecule type" value="mRNA"/>
</dbReference>
<dbReference type="RefSeq" id="NP_001003090.1">
    <property type="nucleotide sequence ID" value="NM_001003090.1"/>
</dbReference>
<dbReference type="SMR" id="Q9XSJ7"/>
<dbReference type="ComplexPortal" id="CPX-3103">
    <property type="entry name" value="Collagen type I trimer"/>
</dbReference>
<dbReference type="FunCoup" id="Q9XSJ7">
    <property type="interactions" value="229"/>
</dbReference>
<dbReference type="STRING" id="9615.ENSCAFP00000025056"/>
<dbReference type="ChEMBL" id="CHEMBL3751652"/>
<dbReference type="GlyCosmos" id="Q9XSJ7">
    <property type="glycosylation" value="3 sites, No reported glycans"/>
</dbReference>
<dbReference type="PaxDb" id="9612-ENSCAFP00000025056"/>
<dbReference type="GeneID" id="403651"/>
<dbReference type="KEGG" id="cfa:403651"/>
<dbReference type="CTD" id="1277"/>
<dbReference type="eggNOG" id="KOG3544">
    <property type="taxonomic scope" value="Eukaryota"/>
</dbReference>
<dbReference type="InParanoid" id="Q9XSJ7"/>
<dbReference type="OrthoDB" id="8939548at2759"/>
<dbReference type="Proteomes" id="UP000002254">
    <property type="component" value="Unplaced"/>
</dbReference>
<dbReference type="Proteomes" id="UP000694429">
    <property type="component" value="Unplaced"/>
</dbReference>
<dbReference type="Proteomes" id="UP000694542">
    <property type="component" value="Unplaced"/>
</dbReference>
<dbReference type="Proteomes" id="UP000805418">
    <property type="component" value="Unplaced"/>
</dbReference>
<dbReference type="GO" id="GO:0005584">
    <property type="term" value="C:collagen type I trimer"/>
    <property type="evidence" value="ECO:0000318"/>
    <property type="project" value="GO_Central"/>
</dbReference>
<dbReference type="GO" id="GO:0062023">
    <property type="term" value="C:collagen-containing extracellular matrix"/>
    <property type="evidence" value="ECO:0000318"/>
    <property type="project" value="GO_Central"/>
</dbReference>
<dbReference type="GO" id="GO:0005737">
    <property type="term" value="C:cytoplasm"/>
    <property type="evidence" value="ECO:0000318"/>
    <property type="project" value="GO_Central"/>
</dbReference>
<dbReference type="GO" id="GO:0005615">
    <property type="term" value="C:extracellular space"/>
    <property type="evidence" value="ECO:0000318"/>
    <property type="project" value="GO_Central"/>
</dbReference>
<dbReference type="GO" id="GO:0030020">
    <property type="term" value="F:extracellular matrix structural constituent conferring tensile strength"/>
    <property type="evidence" value="ECO:0000318"/>
    <property type="project" value="GO_Central"/>
</dbReference>
<dbReference type="GO" id="GO:0046872">
    <property type="term" value="F:metal ion binding"/>
    <property type="evidence" value="ECO:0007669"/>
    <property type="project" value="UniProtKB-KW"/>
</dbReference>
<dbReference type="GO" id="GO:0001568">
    <property type="term" value="P:blood vessel development"/>
    <property type="evidence" value="ECO:0000318"/>
    <property type="project" value="GO_Central"/>
</dbReference>
<dbReference type="GO" id="GO:0001503">
    <property type="term" value="P:ossification"/>
    <property type="evidence" value="ECO:0000318"/>
    <property type="project" value="GO_Central"/>
</dbReference>
<dbReference type="GO" id="GO:0009612">
    <property type="term" value="P:response to mechanical stimulus"/>
    <property type="evidence" value="ECO:0000318"/>
    <property type="project" value="GO_Central"/>
</dbReference>
<dbReference type="GO" id="GO:0001501">
    <property type="term" value="P:skeletal system development"/>
    <property type="evidence" value="ECO:0000318"/>
    <property type="project" value="GO_Central"/>
</dbReference>
<dbReference type="GO" id="GO:0043588">
    <property type="term" value="P:skin development"/>
    <property type="evidence" value="ECO:0000318"/>
    <property type="project" value="GO_Central"/>
</dbReference>
<dbReference type="FunFam" id="2.60.120.1000:FF:000001">
    <property type="entry name" value="Collagen alpha-1 type I chain"/>
    <property type="match status" value="1"/>
</dbReference>
<dbReference type="FunFam" id="2.10.70.10:FF:000013">
    <property type="entry name" value="Collagen, type I, alpha 1"/>
    <property type="match status" value="1"/>
</dbReference>
<dbReference type="Gene3D" id="2.60.120.1000">
    <property type="match status" value="1"/>
</dbReference>
<dbReference type="Gene3D" id="2.10.70.10">
    <property type="entry name" value="Complement Module, domain 1"/>
    <property type="match status" value="1"/>
</dbReference>
<dbReference type="InterPro" id="IPR008160">
    <property type="entry name" value="Collagen"/>
</dbReference>
<dbReference type="InterPro" id="IPR050149">
    <property type="entry name" value="Collagen_superfamily"/>
</dbReference>
<dbReference type="InterPro" id="IPR000885">
    <property type="entry name" value="Fib_collagen_C"/>
</dbReference>
<dbReference type="InterPro" id="IPR001007">
    <property type="entry name" value="VWF_dom"/>
</dbReference>
<dbReference type="PANTHER" id="PTHR24023">
    <property type="entry name" value="COLLAGEN ALPHA"/>
    <property type="match status" value="1"/>
</dbReference>
<dbReference type="PANTHER" id="PTHR24023:SF1082">
    <property type="entry name" value="COLLAGEN TRIPLE HELIX REPEAT"/>
    <property type="match status" value="1"/>
</dbReference>
<dbReference type="Pfam" id="PF01410">
    <property type="entry name" value="COLFI"/>
    <property type="match status" value="1"/>
</dbReference>
<dbReference type="Pfam" id="PF01391">
    <property type="entry name" value="Collagen"/>
    <property type="match status" value="11"/>
</dbReference>
<dbReference type="Pfam" id="PF00093">
    <property type="entry name" value="VWC"/>
    <property type="match status" value="1"/>
</dbReference>
<dbReference type="SMART" id="SM00038">
    <property type="entry name" value="COLFI"/>
    <property type="match status" value="1"/>
</dbReference>
<dbReference type="SMART" id="SM00214">
    <property type="entry name" value="VWC"/>
    <property type="match status" value="1"/>
</dbReference>
<dbReference type="SUPFAM" id="SSF57603">
    <property type="entry name" value="FnI-like domain"/>
    <property type="match status" value="1"/>
</dbReference>
<dbReference type="PROSITE" id="PS51461">
    <property type="entry name" value="NC1_FIB"/>
    <property type="match status" value="1"/>
</dbReference>
<dbReference type="PROSITE" id="PS01208">
    <property type="entry name" value="VWFC_1"/>
    <property type="match status" value="1"/>
</dbReference>
<dbReference type="PROSITE" id="PS50184">
    <property type="entry name" value="VWFC_2"/>
    <property type="match status" value="1"/>
</dbReference>
<comment type="function">
    <text>Type I collagen is a member of group I collagen (fibrillar forming collagen).</text>
</comment>
<comment type="subunit">
    <text evidence="2 3 4">Trimers of one alpha 2(I) and two alpha 1(I) chains. Interacts with MRC2. Interacts with TRAM2. Interacts with MFAP4 in a Ca (2+)-dependent manner.</text>
</comment>
<comment type="subcellular location">
    <subcellularLocation>
        <location evidence="9">Secreted</location>
        <location evidence="9">Extracellular space</location>
        <location evidence="9">Extracellular matrix</location>
    </subcellularLocation>
</comment>
<comment type="domain">
    <text evidence="1">The C-terminal propeptide, also known as COLFI domain, have crucial roles in tissue growth and repair by controlling both the intracellular assembly of procollagen molecules and the extracellular assembly of collagen fibrils. It binds a calcium ion which is essential for its function (By similarity).</text>
</comment>
<comment type="PTM">
    <text evidence="6">Contains mostly 4-hydroxyproline. Proline residues at the third position of the tripeptide repeating unit (G-X-Y) are hydroxylated in some or all of the chains.</text>
</comment>
<comment type="PTM">
    <text evidence="6">Contains 3-hydroxyproline at a few sites. This modification occurs on the first proline residue in the sequence motif Gly-Pro-Hyp, where Hyp is 4-hydroxyproline.</text>
</comment>
<comment type="PTM">
    <text evidence="5">Lysine residues at the third position of the tripeptide repeating unit (G-X-Y) are 5-hydroxylated in some or all of the chains.</text>
</comment>
<comment type="PTM">
    <text evidence="6">O-glycosylated on hydroxylated lysine residues. The O-linked glycan consists of a Glc-Gal disaccharide.</text>
</comment>
<comment type="disease">
    <text>Defects in COL1A1 are a cause of osteogenesis imperfecta (OI).</text>
</comment>
<comment type="similarity">
    <text evidence="9">Belongs to the fibrillar collagen family.</text>
</comment>
<keyword id="KW-0106">Calcium</keyword>
<keyword id="KW-0176">Collagen</keyword>
<keyword id="KW-0225">Disease variant</keyword>
<keyword id="KW-1015">Disulfide bond</keyword>
<keyword id="KW-0272">Extracellular matrix</keyword>
<keyword id="KW-0325">Glycoprotein</keyword>
<keyword id="KW-0379">Hydroxylation</keyword>
<keyword id="KW-0479">Metal-binding</keyword>
<keyword id="KW-0597">Phosphoprotein</keyword>
<keyword id="KW-1185">Reference proteome</keyword>
<keyword id="KW-0677">Repeat</keyword>
<keyword id="KW-0964">Secreted</keyword>
<keyword id="KW-0732">Signal</keyword>
<sequence>MFSFVDLRLLLLLAATALLTHGQEEGQEEDIPPVTCVQNGLRYYDRDVWKPEACRICVCDNGNVLCDDVICDETKNCPGAQVPPGECCPVCPDGEASPTDQETTGVEGPKGDTGPRGPRGPAGPPGRDGIPGQPGLPGPPGPPGPPGPPGLGGNFAPQMSYGYDEKSTGGISVPGPMGPSGPRGLPGPPGAPGPQGFQGPPGEPGEPGASGPMGPRGPPGPPGKNGDDGEAGKPGRPGERGPPGPQGARGLPGTAGLPGMKGHRGFSGLDGAKGDAGPAGPKGEPGSPGENGAPGQMGPRGLPGERGRPGAPGPAGARGNDGATGAAGPPGPTGPAGPPGFPGAVGAKGEAGPQGARGSEGPQGVRGEPGPPGPAGAAGPAGNPGADGQPGAKGANGAPGIAGAPGFPGARGPSGPQGPSGPPGPKGNSGEPGAPGNKGDTGAKGEPGPTGIQGPPGPAGEEGKRGARGEPGPTGLPGPPGERGGPGSRGFPGADGVAGPKGPAGERGSPGPAGPKGSPGEAGRPGEAGLPGAKGLTGSPGSPGPDGKTGPPGPAGQDGRPGPPGPPGARGQAGVMGFPGPKGAAGEPGKAGERGVPGPPGAVGPAGKDGEAGAQGPPGPAGPAGERGEQGPAGSPGFQGLPGPAGPPGEAGKPGEQGVPGDLGAPGPSGARGERGFPGERGVQGPPGPAGPRGANGAPGNDGAKGDAGAPGAPGSQGAPGLQGMPGERGAAGLPGPKGDRGDAGPKGADGSPGKDGVRGLTGPIGPPGPAGAPGDKGEAGPSGPAGPTGARGAPGDRGEPGPPGPAGFAGPPGADGQPGAKGEPGDAGAKGDAGPPGPAGPTGPPGPIGNVGAPGPKGARGSAGPPGATGFPGAAGRVGPPGPSGNAGPPGPPGPAGKEGGKGARGETGPAGRPGEVGPPGPPGPAGEKGSPGADGPAGAPGTPGPQGIAGQRGVVGLPGQRGERGFPGLPGPSGEPGKQGPSGTSGERGPPGPMGPPGLAGPPGESGREGSPGAEGSPGRDGSPGPKGDRGETGPAGPPGAPGAPGAPGPVGPAGKNGDRGETGPAGPAGPIGPVGARGPAGPQGPRGDKGETGEQGDRGIKGHRGFSGLQGPPGPPGSPGEQGPSGASGPAGPRGPPGSAGSPGKDGLNGLPGPIGPPGPRGRTGDAGPVGPPGPPGPPGPPGPPSGGFDFSFLPQPPQEKAHDGGRYYRADDANVVRDRDLEVDTTLKSLSQQIENIRSPEGSRKNPARTCRDLKMCHSDWKSGEYWIDPNQGCNLDAIKVFCNMETGETCVYPTQPQVAQKNWYISKNPKEKRHVWYGESMTDGFQFEYGGQGSDPADVAIQLTFLRLMSTEASQNITYHCKNSVAYMDQQTGNLKKALLLQGSNEIEIRAEGNSRFTYSVTYDGCTSHTGAWGKTVIEYKTTKTSRLPIIDVAPLDVGAPDQEFGMDIGPVCFL</sequence>
<name>CO1A1_CANLF</name>
<reference key="1">
    <citation type="journal article" date="2000" name="Arch. Biochem. Biophys.">
        <title>Sequence of normal canine COL1A1 cDNA and identification of a heterozygous alpha1(I) collagen Gly208Ala mutation in a severe case of canine osteogenesis imperfecta.</title>
        <authorList>
            <person name="Campbell B.G."/>
            <person name="Wootton J.A.M."/>
            <person name="MacLeod J.N."/>
            <person name="Minor R.R."/>
        </authorList>
    </citation>
    <scope>NUCLEOTIDE SEQUENCE [MRNA]</scope>
    <scope>VARIANT OI ALA-208</scope>
    <source>
        <tissue>Skin</tissue>
    </source>
</reference>
<organism>
    <name type="scientific">Canis lupus familiaris</name>
    <name type="common">Dog</name>
    <name type="synonym">Canis familiaris</name>
    <dbReference type="NCBI Taxonomy" id="9615"/>
    <lineage>
        <taxon>Eukaryota</taxon>
        <taxon>Metazoa</taxon>
        <taxon>Chordata</taxon>
        <taxon>Craniata</taxon>
        <taxon>Vertebrata</taxon>
        <taxon>Euteleostomi</taxon>
        <taxon>Mammalia</taxon>
        <taxon>Eutheria</taxon>
        <taxon>Laurasiatheria</taxon>
        <taxon>Carnivora</taxon>
        <taxon>Caniformia</taxon>
        <taxon>Canidae</taxon>
        <taxon>Canis</taxon>
    </lineage>
</organism>
<protein>
    <recommendedName>
        <fullName>Collagen alpha-1(I) chain</fullName>
    </recommendedName>
    <alternativeName>
        <fullName>Alpha-1 type I collagen</fullName>
    </alternativeName>
</protein>
<evidence type="ECO:0000250" key="1"/>
<evidence type="ECO:0000250" key="2">
    <source>
        <dbReference type="UniProtKB" id="P02452"/>
    </source>
</evidence>
<evidence type="ECO:0000250" key="3">
    <source>
        <dbReference type="UniProtKB" id="P02453"/>
    </source>
</evidence>
<evidence type="ECO:0000250" key="4">
    <source>
        <dbReference type="UniProtKB" id="P02454"/>
    </source>
</evidence>
<evidence type="ECO:0000250" key="5">
    <source>
        <dbReference type="UniProtKB" id="P02457"/>
    </source>
</evidence>
<evidence type="ECO:0000250" key="6">
    <source>
        <dbReference type="UniProtKB" id="P11087"/>
    </source>
</evidence>
<evidence type="ECO:0000255" key="7"/>
<evidence type="ECO:0000255" key="8">
    <source>
        <dbReference type="PROSITE-ProRule" id="PRU00220"/>
    </source>
</evidence>
<evidence type="ECO:0000255" key="9">
    <source>
        <dbReference type="PROSITE-ProRule" id="PRU00793"/>
    </source>
</evidence>
<evidence type="ECO:0000256" key="10">
    <source>
        <dbReference type="SAM" id="MobiDB-lite"/>
    </source>
</evidence>
<evidence type="ECO:0000269" key="11">
    <source>
    </source>
</evidence>
<proteinExistence type="evidence at protein level"/>
<feature type="signal peptide" evidence="2">
    <location>
        <begin position="1"/>
        <end position="22"/>
    </location>
</feature>
<feature type="propeptide" id="PRO_0000005713" description="N-terminal propeptide" evidence="2">
    <location>
        <begin position="23"/>
        <end position="157"/>
    </location>
</feature>
<feature type="chain" id="PRO_0000005714" description="Collagen alpha-1(I) chain" evidence="2">
    <location>
        <begin position="158"/>
        <end position="1214"/>
    </location>
</feature>
<feature type="propeptide" id="PRO_0000005715" description="C-terminal propeptide" evidence="2">
    <location>
        <begin position="1215"/>
        <end position="1460"/>
    </location>
</feature>
<feature type="domain" description="VWFC" evidence="8">
    <location>
        <begin position="34"/>
        <end position="92"/>
    </location>
</feature>
<feature type="domain" description="Fibrillar collagen NC1" evidence="9">
    <location>
        <begin position="1225"/>
        <end position="1460"/>
    </location>
</feature>
<feature type="region of interest" description="Disordered" evidence="10">
    <location>
        <begin position="96"/>
        <end position="1213"/>
    </location>
</feature>
<feature type="region of interest" description="Nonhelical region (N-terminal)">
    <location>
        <begin position="158"/>
        <end position="174"/>
    </location>
</feature>
<feature type="region of interest" description="Triple-helical region">
    <location>
        <begin position="175"/>
        <end position="1188"/>
    </location>
</feature>
<feature type="region of interest" description="Nonhelical region (C-terminal)">
    <location>
        <begin position="1189"/>
        <end position="1214"/>
    </location>
</feature>
<feature type="short sequence motif" description="Cell attachment site" evidence="7">
    <location>
        <begin position="741"/>
        <end position="743"/>
    </location>
</feature>
<feature type="short sequence motif" description="Cell attachment site" evidence="7">
    <location>
        <begin position="1089"/>
        <end position="1091"/>
    </location>
</feature>
<feature type="compositionally biased region" description="Pro residues" evidence="10">
    <location>
        <begin position="134"/>
        <end position="149"/>
    </location>
</feature>
<feature type="compositionally biased region" description="Low complexity" evidence="10">
    <location>
        <begin position="194"/>
        <end position="213"/>
    </location>
</feature>
<feature type="compositionally biased region" description="Basic and acidic residues" evidence="10">
    <location>
        <begin position="225"/>
        <end position="239"/>
    </location>
</feature>
<feature type="compositionally biased region" description="Low complexity" evidence="10">
    <location>
        <begin position="275"/>
        <end position="291"/>
    </location>
</feature>
<feature type="compositionally biased region" description="Low complexity" evidence="10">
    <location>
        <begin position="314"/>
        <end position="327"/>
    </location>
</feature>
<feature type="compositionally biased region" description="Pro residues" evidence="10">
    <location>
        <begin position="329"/>
        <end position="341"/>
    </location>
</feature>
<feature type="compositionally biased region" description="Low complexity" evidence="10">
    <location>
        <begin position="375"/>
        <end position="414"/>
    </location>
</feature>
<feature type="compositionally biased region" description="Gly residues" evidence="10">
    <location>
        <begin position="481"/>
        <end position="490"/>
    </location>
</feature>
<feature type="compositionally biased region" description="Low complexity" evidence="10">
    <location>
        <begin position="534"/>
        <end position="560"/>
    </location>
</feature>
<feature type="compositionally biased region" description="Low complexity" evidence="10">
    <location>
        <begin position="569"/>
        <end position="588"/>
    </location>
</feature>
<feature type="compositionally biased region" description="Low complexity" evidence="10">
    <location>
        <begin position="630"/>
        <end position="657"/>
    </location>
</feature>
<feature type="compositionally biased region" description="Low complexity" evidence="10">
    <location>
        <begin position="692"/>
        <end position="720"/>
    </location>
</feature>
<feature type="compositionally biased region" description="Low complexity" evidence="10">
    <location>
        <begin position="780"/>
        <end position="794"/>
    </location>
</feature>
<feature type="compositionally biased region" description="Low complexity" evidence="10">
    <location>
        <begin position="807"/>
        <end position="834"/>
    </location>
</feature>
<feature type="compositionally biased region" description="Pro residues" evidence="10">
    <location>
        <begin position="836"/>
        <end position="848"/>
    </location>
</feature>
<feature type="compositionally biased region" description="Low complexity" evidence="10">
    <location>
        <begin position="863"/>
        <end position="879"/>
    </location>
</feature>
<feature type="compositionally biased region" description="Low complexity" evidence="10">
    <location>
        <begin position="908"/>
        <end position="917"/>
    </location>
</feature>
<feature type="compositionally biased region" description="Low complexity" evidence="10">
    <location>
        <begin position="927"/>
        <end position="951"/>
    </location>
</feature>
<feature type="compositionally biased region" description="Pro residues" evidence="10">
    <location>
        <begin position="992"/>
        <end position="1002"/>
    </location>
</feature>
<feature type="compositionally biased region" description="Low complexity" evidence="10">
    <location>
        <begin position="1004"/>
        <end position="1019"/>
    </location>
</feature>
<feature type="compositionally biased region" description="Pro residues" evidence="10">
    <location>
        <begin position="1038"/>
        <end position="1053"/>
    </location>
</feature>
<feature type="compositionally biased region" description="Low complexity" evidence="10">
    <location>
        <begin position="1074"/>
        <end position="1088"/>
    </location>
</feature>
<feature type="compositionally biased region" description="Basic and acidic residues" evidence="10">
    <location>
        <begin position="1089"/>
        <end position="1103"/>
    </location>
</feature>
<feature type="compositionally biased region" description="Low complexity" evidence="10">
    <location>
        <begin position="1122"/>
        <end position="1155"/>
    </location>
</feature>
<feature type="compositionally biased region" description="Pro residues" evidence="10">
    <location>
        <begin position="1173"/>
        <end position="1188"/>
    </location>
</feature>
<feature type="compositionally biased region" description="Basic and acidic residues" evidence="10">
    <location>
        <begin position="1203"/>
        <end position="1213"/>
    </location>
</feature>
<feature type="binding site" evidence="1">
    <location>
        <position position="1273"/>
    </location>
    <ligand>
        <name>Ca(2+)</name>
        <dbReference type="ChEBI" id="CHEBI:29108"/>
    </ligand>
</feature>
<feature type="binding site" evidence="1">
    <location>
        <position position="1275"/>
    </location>
    <ligand>
        <name>Ca(2+)</name>
        <dbReference type="ChEBI" id="CHEBI:29108"/>
    </ligand>
</feature>
<feature type="binding site" evidence="1">
    <location>
        <position position="1276"/>
    </location>
    <ligand>
        <name>Ca(2+)</name>
        <dbReference type="ChEBI" id="CHEBI:29108"/>
    </ligand>
</feature>
<feature type="binding site" evidence="1">
    <location>
        <position position="1278"/>
    </location>
    <ligand>
        <name>Ca(2+)</name>
        <dbReference type="ChEBI" id="CHEBI:29108"/>
    </ligand>
</feature>
<feature type="binding site" evidence="1">
    <location>
        <position position="1281"/>
    </location>
    <ligand>
        <name>Ca(2+)</name>
        <dbReference type="ChEBI" id="CHEBI:29108"/>
    </ligand>
</feature>
<feature type="modified residue" description="Allysine" evidence="2">
    <location>
        <position position="166"/>
    </location>
</feature>
<feature type="modified residue" description="Phosphoserine" evidence="4">
    <location>
        <position position="167"/>
    </location>
</feature>
<feature type="modified residue" description="4-hydroxyproline" evidence="5">
    <location>
        <position position="186"/>
    </location>
</feature>
<feature type="modified residue" description="4-hydroxyproline" evidence="5">
    <location>
        <position position="189"/>
    </location>
</feature>
<feature type="modified residue" description="4-hydroxyproline" evidence="5">
    <location>
        <position position="192"/>
    </location>
</feature>
<feature type="modified residue" description="4-hydroxyproline" evidence="5">
    <location>
        <position position="201"/>
    </location>
</feature>
<feature type="modified residue" description="4-hydroxyproline" evidence="5">
    <location>
        <position position="204"/>
    </location>
</feature>
<feature type="modified residue" description="4-hydroxyproline" evidence="5">
    <location>
        <position position="207"/>
    </location>
</feature>
<feature type="modified residue" description="4-hydroxyproline" evidence="5">
    <location>
        <position position="222"/>
    </location>
</feature>
<feature type="modified residue" description="4-hydroxyproline" evidence="5">
    <location>
        <position position="237"/>
    </location>
</feature>
<feature type="modified residue" description="4-hydroxyproline" evidence="5">
    <location>
        <position position="243"/>
    </location>
</feature>
<feature type="modified residue" description="4-hydroxyproline" evidence="5">
    <location>
        <position position="252"/>
    </location>
</feature>
<feature type="modified residue" description="4-hydroxyproline" evidence="5">
    <location>
        <position position="258"/>
    </location>
</feature>
<feature type="modified residue" description="5-hydroxylysine; alternate" evidence="6">
    <location>
        <position position="261"/>
    </location>
</feature>
<feature type="modified residue" description="Phosphoserine" evidence="4">
    <location>
        <position position="267"/>
    </location>
</feature>
<feature type="modified residue" description="4-hydroxyproline" evidence="5">
    <location>
        <position position="285"/>
    </location>
</feature>
<feature type="modified residue" description="4-hydroxyproline" evidence="5">
    <location>
        <position position="288"/>
    </location>
</feature>
<feature type="modified residue" description="4-hydroxyproline" evidence="5">
    <location>
        <position position="294"/>
    </location>
</feature>
<feature type="modified residue" description="4-hydroxyproline" evidence="5">
    <location>
        <position position="303"/>
    </location>
</feature>
<feature type="modified residue" description="4-hydroxyproline" evidence="5">
    <location>
        <position position="309"/>
    </location>
</feature>
<feature type="modified residue" description="4-hydroxyproline" evidence="5">
    <location>
        <position position="330"/>
    </location>
</feature>
<feature type="modified residue" description="4-hydroxyproline" evidence="5">
    <location>
        <position position="339"/>
    </location>
</feature>
<feature type="modified residue" description="4-hydroxyproline" evidence="5">
    <location>
        <position position="342"/>
    </location>
</feature>
<feature type="modified residue" description="4-hydroxyproline" evidence="5">
    <location>
        <position position="369"/>
    </location>
</feature>
<feature type="modified residue" description="4-hydroxyproline" evidence="5">
    <location>
        <position position="372"/>
    </location>
</feature>
<feature type="modified residue" description="4-hydroxyproline" evidence="5">
    <location>
        <position position="384"/>
    </location>
</feature>
<feature type="modified residue" description="4-hydroxyproline" evidence="5">
    <location>
        <position position="390"/>
    </location>
</feature>
<feature type="modified residue" description="4-hydroxyproline" evidence="5">
    <location>
        <position position="399"/>
    </location>
</feature>
<feature type="modified residue" description="4-hydroxyproline" evidence="5">
    <location>
        <position position="405"/>
    </location>
</feature>
<feature type="modified residue" description="4-hydroxyproline" evidence="5">
    <location>
        <position position="408"/>
    </location>
</feature>
<feature type="modified residue" description="4-hydroxyproline" evidence="5">
    <location>
        <position position="423"/>
    </location>
</feature>
<feature type="modified residue" description="5-hydroxylysine" evidence="5">
    <location>
        <position position="426"/>
    </location>
</feature>
<feature type="modified residue" description="4-hydroxyproline" evidence="5">
    <location>
        <position position="432"/>
    </location>
</feature>
<feature type="modified residue" description="4-hydroxyproline" evidence="5">
    <location>
        <position position="435"/>
    </location>
</feature>
<feature type="modified residue" description="4-hydroxyproline" evidence="5">
    <location>
        <position position="447"/>
    </location>
</feature>
<feature type="modified residue" description="4-hydroxyproline" evidence="5">
    <location>
        <position position="456"/>
    </location>
</feature>
<feature type="modified residue" description="4-hydroxyproline" evidence="5">
    <location>
        <position position="471"/>
    </location>
</feature>
<feature type="modified residue" description="4-hydroxyproline" evidence="5">
    <location>
        <position position="477"/>
    </location>
</feature>
<feature type="modified residue" description="4-hydroxyproline" evidence="5">
    <location>
        <position position="486"/>
    </location>
</feature>
<feature type="modified residue" description="4-hydroxyproline" evidence="5">
    <location>
        <position position="492"/>
    </location>
</feature>
<feature type="modified residue" description="5-hydroxylysine" evidence="5">
    <location>
        <position position="501"/>
    </location>
</feature>
<feature type="modified residue" description="4-hydroxyproline" evidence="5">
    <location>
        <position position="510"/>
    </location>
</feature>
<feature type="modified residue" description="4-hydroxyproline" evidence="5">
    <location>
        <position position="519"/>
    </location>
</feature>
<feature type="modified residue" description="4-hydroxyproline" evidence="5">
    <location>
        <position position="525"/>
    </location>
</feature>
<feature type="modified residue" description="4-hydroxyproline" evidence="5">
    <location>
        <position position="531"/>
    </location>
</feature>
<feature type="modified residue" description="4-hydroxyproline" evidence="5">
    <location>
        <position position="540"/>
    </location>
</feature>
<feature type="modified residue" description="4-hydroxyproline" evidence="5">
    <location>
        <position position="543"/>
    </location>
</feature>
<feature type="modified residue" description="4-hydroxyproline" evidence="5">
    <location>
        <position position="552"/>
    </location>
</feature>
<feature type="modified residue" description="4-hydroxyproline" evidence="5">
    <location>
        <position position="561"/>
    </location>
</feature>
<feature type="modified residue" description="4-hydroxyproline" evidence="5">
    <location>
        <position position="567"/>
    </location>
</feature>
<feature type="modified residue" description="4-hydroxyproline" evidence="5">
    <location>
        <position position="579"/>
    </location>
</feature>
<feature type="modified residue" description="4-hydroxyproline" evidence="5">
    <location>
        <position position="588"/>
    </location>
</feature>
<feature type="modified residue" description="4-hydroxyproline" evidence="5">
    <location>
        <position position="597"/>
    </location>
</feature>
<feature type="modified residue" description="4-hydroxyproline" evidence="5">
    <location>
        <position position="600"/>
    </location>
</feature>
<feature type="modified residue" description="4-hydroxyproline" evidence="5">
    <location>
        <position position="618"/>
    </location>
</feature>
<feature type="modified residue" description="4-hydroxyproline" evidence="5">
    <location>
        <position position="636"/>
    </location>
</feature>
<feature type="modified residue" description="4-hydroxyproline" evidence="5">
    <location>
        <position position="642"/>
    </location>
</feature>
<feature type="modified residue" description="4-hydroxyproline" evidence="5">
    <location>
        <position position="648"/>
    </location>
</feature>
<feature type="modified residue" description="4-hydroxyproline" evidence="5">
    <location>
        <position position="654"/>
    </location>
</feature>
<feature type="modified residue" description="4-hydroxyproline" evidence="5">
    <location>
        <position position="660"/>
    </location>
</feature>
<feature type="modified residue" description="4-hydroxyproline" evidence="5">
    <location>
        <position position="666"/>
    </location>
</feature>
<feature type="modified residue" description="4-hydroxyproline" evidence="5">
    <location>
        <position position="678"/>
    </location>
</feature>
<feature type="modified residue" description="4-hydroxyproline" evidence="5">
    <location>
        <position position="687"/>
    </location>
</feature>
<feature type="modified residue" description="4-hydroxyproline" evidence="5">
    <location>
        <position position="699"/>
    </location>
</feature>
<feature type="modified residue" description="4-hydroxyproline" evidence="5">
    <location>
        <position position="711"/>
    </location>
</feature>
<feature type="modified residue" description="4-hydroxyproline" evidence="5">
    <location>
        <position position="714"/>
    </location>
</feature>
<feature type="modified residue" description="4-hydroxyproline" evidence="5">
    <location>
        <position position="720"/>
    </location>
</feature>
<feature type="modified residue" description="4-hydroxyproline" evidence="5">
    <location>
        <position position="726"/>
    </location>
</feature>
<feature type="modified residue" description="4-hydroxyproline" evidence="5">
    <location>
        <position position="735"/>
    </location>
</feature>
<feature type="modified residue" description="5-hydroxylysine" evidence="5">
    <location>
        <position position="747"/>
    </location>
</feature>
<feature type="modified residue" description="4-hydroxyproline" evidence="5">
    <location>
        <position position="753"/>
    </location>
</feature>
<feature type="modified residue" description="4-hydroxyproline" evidence="5">
    <location>
        <position position="768"/>
    </location>
</feature>
<feature type="modified residue" description="4-hydroxyproline" evidence="5">
    <location>
        <position position="774"/>
    </location>
</feature>
<feature type="modified residue" description="Phosphoserine" evidence="4">
    <location>
        <position position="783"/>
    </location>
</feature>
<feature type="modified residue" description="4-hydroxyproline" evidence="5">
    <location>
        <position position="795"/>
    </location>
</feature>
<feature type="modified residue" description="4-hydroxyproline" evidence="5">
    <location>
        <position position="801"/>
    </location>
</feature>
<feature type="modified residue" description="4-hydroxyproline" evidence="5">
    <location>
        <position position="804"/>
    </location>
</feature>
<feature type="modified residue" description="4-hydroxyproline" evidence="5">
    <location>
        <position position="813"/>
    </location>
</feature>
<feature type="modified residue" description="4-hydroxyproline" evidence="5">
    <location>
        <position position="819"/>
    </location>
</feature>
<feature type="modified residue" description="4-hydroxyproline" evidence="5">
    <location>
        <position position="837"/>
    </location>
</feature>
<feature type="modified residue" description="4-hydroxyproline" evidence="5">
    <location>
        <position position="846"/>
    </location>
</feature>
<feature type="modified residue" description="4-hydroxyproline" evidence="5">
    <location>
        <position position="855"/>
    </location>
</feature>
<feature type="modified residue" description="5-hydroxylysine" evidence="5">
    <location>
        <position position="858"/>
    </location>
</feature>
<feature type="modified residue" description="4-hydroxyproline" evidence="5">
    <location>
        <position position="867"/>
    </location>
</feature>
<feature type="modified residue" description="4-hydroxyproline" evidence="5">
    <location>
        <position position="873"/>
    </location>
</feature>
<feature type="modified residue" description="3-hydroxyproline" evidence="6">
    <location>
        <position position="881"/>
    </location>
</feature>
<feature type="modified residue" description="4-hydroxyproline" evidence="6">
    <location>
        <position position="882"/>
    </location>
</feature>
<feature type="modified residue" description="4-hydroxyproline" evidence="6">
    <location>
        <position position="891"/>
    </location>
</feature>
<feature type="modified residue" description="4-hydroxyproline" evidence="6">
    <location>
        <position position="894"/>
    </location>
</feature>
<feature type="modified residue" description="4-hydroxyproline" evidence="5">
    <location>
        <position position="915"/>
    </location>
</feature>
<feature type="modified residue" description="4-hydroxyproline" evidence="5">
    <location>
        <position position="924"/>
    </location>
</feature>
<feature type="modified residue" description="4-hydroxyproline" evidence="5">
    <location>
        <position position="933"/>
    </location>
</feature>
<feature type="modified residue" description="4-hydroxyproline" evidence="5">
    <location>
        <position position="942"/>
    </location>
</feature>
<feature type="modified residue" description="4-hydroxyproline" evidence="5">
    <location>
        <position position="960"/>
    </location>
</feature>
<feature type="modified residue" description="4-hydroxyproline" evidence="5">
    <location>
        <position position="969"/>
    </location>
</feature>
<feature type="modified residue" description="4-hydroxyproline" evidence="5">
    <location>
        <position position="972"/>
    </location>
</feature>
<feature type="modified residue" description="4-hydroxyproline" evidence="5">
    <location>
        <position position="978"/>
    </location>
</feature>
<feature type="modified residue" description="4-hydroxyproline" evidence="5">
    <location>
        <position position="993"/>
    </location>
</feature>
<feature type="modified residue" description="4-hydroxyproline" evidence="5">
    <location>
        <position position="999"/>
    </location>
</feature>
<feature type="modified residue" description="4-hydroxyproline" evidence="5">
    <location>
        <position position="1005"/>
    </location>
</feature>
<feature type="modified residue" description="4-hydroxyproline" evidence="5">
    <location>
        <position position="1014"/>
    </location>
</feature>
<feature type="modified residue" description="4-hydroxyproline" evidence="5">
    <location>
        <position position="1020"/>
    </location>
</feature>
<feature type="modified residue" description="5-hydroxylysine" evidence="5">
    <location>
        <position position="1029"/>
    </location>
</feature>
<feature type="modified residue" description="4-hydroxyproline" evidence="5">
    <location>
        <position position="1041"/>
    </location>
</feature>
<feature type="modified residue" description="4-hydroxyproline" evidence="5">
    <location>
        <position position="1044"/>
    </location>
</feature>
<feature type="modified residue" description="4-hydroxyproline" evidence="5">
    <location>
        <position position="1047"/>
    </location>
</feature>
<feature type="modified residue" description="5-hydroxylysine" evidence="5">
    <location>
        <position position="1092"/>
    </location>
</feature>
<feature type="modified residue" description="5-hydroxylysine; alternate" evidence="6">
    <location>
        <position position="1104"/>
    </location>
</feature>
<feature type="modified residue" description="4-hydroxyproline" evidence="5">
    <location>
        <position position="1116"/>
    </location>
</feature>
<feature type="modified residue" description="4-hydroxyproline" evidence="5">
    <location>
        <position position="1119"/>
    </location>
</feature>
<feature type="modified residue" description="4-hydroxyproline" evidence="5">
    <location>
        <position position="1122"/>
    </location>
</feature>
<feature type="modified residue" description="4-hydroxyproline" evidence="5">
    <location>
        <position position="1140"/>
    </location>
</feature>
<feature type="modified residue" description="4-hydroxyproline" evidence="6">
    <location>
        <position position="1155"/>
    </location>
</feature>
<feature type="modified residue" description="3-hydroxyproline" evidence="6">
    <location>
        <position position="1160"/>
    </location>
</feature>
<feature type="modified residue" description="4-hydroxyproline" evidence="6">
    <location>
        <position position="1161"/>
    </location>
</feature>
<feature type="modified residue" description="3-hydroxyproline" evidence="6">
    <location>
        <position position="1175"/>
    </location>
</feature>
<feature type="modified residue" description="4-hydroxyproline" evidence="6">
    <location>
        <position position="1176"/>
    </location>
</feature>
<feature type="modified residue" description="3-hydroxyproline" evidence="6">
    <location>
        <position position="1178"/>
    </location>
</feature>
<feature type="modified residue" description="4-hydroxyproline" evidence="6">
    <location>
        <position position="1179"/>
    </location>
</feature>
<feature type="modified residue" description="3-hydroxyproline" evidence="6">
    <location>
        <position position="1181"/>
    </location>
</feature>
<feature type="modified residue" description="4-hydroxyproline" evidence="6">
    <location>
        <position position="1182"/>
    </location>
</feature>
<feature type="modified residue" description="4-hydroxyproline" evidence="6">
    <location>
        <position position="1185"/>
    </location>
</feature>
<feature type="modified residue" description="4-hydroxyproline" evidence="6">
    <location>
        <position position="1188"/>
    </location>
</feature>
<feature type="modified residue" description="Allysine" evidence="2">
    <location>
        <position position="1204"/>
    </location>
</feature>
<feature type="glycosylation site" description="O-linked (Gal...) hydroxylysine; alternate" evidence="5">
    <location>
        <position position="261"/>
    </location>
</feature>
<feature type="glycosylation site" description="O-linked (Gal...) hydroxylysine; alternate" evidence="5">
    <location>
        <position position="1104"/>
    </location>
</feature>
<feature type="glycosylation site" description="N-linked (GlcNAc...) asparagine" evidence="1">
    <location>
        <position position="1361"/>
    </location>
</feature>
<feature type="disulfide bond" evidence="9">
    <location>
        <begin position="1255"/>
        <end position="1287"/>
    </location>
</feature>
<feature type="disulfide bond" description="Interchain (with C-1278)" evidence="9">
    <location>
        <position position="1261"/>
    </location>
</feature>
<feature type="disulfide bond" description="Interchain (with C-1261)" evidence="9">
    <location>
        <position position="1278"/>
    </location>
</feature>
<feature type="disulfide bond" evidence="9">
    <location>
        <begin position="1295"/>
        <end position="1458"/>
    </location>
</feature>
<feature type="disulfide bond" evidence="9">
    <location>
        <begin position="1366"/>
        <end position="1411"/>
    </location>
</feature>
<feature type="sequence variant" description="In OI; severe." evidence="11">
    <original>G</original>
    <variation>A</variation>
    <location>
        <position position="208"/>
    </location>
</feature>
<accession>Q9XSJ7</accession>